<evidence type="ECO:0000255" key="1">
    <source>
        <dbReference type="HAMAP-Rule" id="MF_01363"/>
    </source>
</evidence>
<evidence type="ECO:0000305" key="2"/>
<feature type="chain" id="PRO_1000143799" description="Large ribosomal subunit protein bL21">
    <location>
        <begin position="1"/>
        <end position="102"/>
    </location>
</feature>
<accession>B1YJS3</accession>
<proteinExistence type="inferred from homology"/>
<name>RL21_EXIS2</name>
<protein>
    <recommendedName>
        <fullName evidence="1">Large ribosomal subunit protein bL21</fullName>
    </recommendedName>
    <alternativeName>
        <fullName evidence="2">50S ribosomal protein L21</fullName>
    </alternativeName>
</protein>
<sequence length="102" mass="11324">MYAIIKTGGKQVKVEAGQEIYVEKLNADVDSTVEFGEVLILGGDDVKVGAPLVEGAKVVATVIKHARAKKITVFKMKAKKNYRRKQGHRQPYTKVRIEKIEA</sequence>
<gene>
    <name evidence="1" type="primary">rplU</name>
    <name type="ordered locus">Exig_2109</name>
</gene>
<keyword id="KW-1185">Reference proteome</keyword>
<keyword id="KW-0687">Ribonucleoprotein</keyword>
<keyword id="KW-0689">Ribosomal protein</keyword>
<keyword id="KW-0694">RNA-binding</keyword>
<keyword id="KW-0699">rRNA-binding</keyword>
<organism>
    <name type="scientific">Exiguobacterium sibiricum (strain DSM 17290 / CCUG 55495 / CIP 109462 / JCM 13490 / 255-15)</name>
    <dbReference type="NCBI Taxonomy" id="262543"/>
    <lineage>
        <taxon>Bacteria</taxon>
        <taxon>Bacillati</taxon>
        <taxon>Bacillota</taxon>
        <taxon>Bacilli</taxon>
        <taxon>Bacillales</taxon>
        <taxon>Bacillales Family XII. Incertae Sedis</taxon>
        <taxon>Exiguobacterium</taxon>
    </lineage>
</organism>
<dbReference type="EMBL" id="CP001022">
    <property type="protein sequence ID" value="ACB61561.1"/>
    <property type="molecule type" value="Genomic_DNA"/>
</dbReference>
<dbReference type="RefSeq" id="WP_012370978.1">
    <property type="nucleotide sequence ID" value="NC_010556.1"/>
</dbReference>
<dbReference type="SMR" id="B1YJS3"/>
<dbReference type="STRING" id="262543.Exig_2109"/>
<dbReference type="GeneID" id="90837364"/>
<dbReference type="KEGG" id="esi:Exig_2109"/>
<dbReference type="eggNOG" id="COG0261">
    <property type="taxonomic scope" value="Bacteria"/>
</dbReference>
<dbReference type="HOGENOM" id="CLU_061463_3_2_9"/>
<dbReference type="OrthoDB" id="9813334at2"/>
<dbReference type="Proteomes" id="UP000001681">
    <property type="component" value="Chromosome"/>
</dbReference>
<dbReference type="GO" id="GO:0005737">
    <property type="term" value="C:cytoplasm"/>
    <property type="evidence" value="ECO:0007669"/>
    <property type="project" value="UniProtKB-ARBA"/>
</dbReference>
<dbReference type="GO" id="GO:1990904">
    <property type="term" value="C:ribonucleoprotein complex"/>
    <property type="evidence" value="ECO:0007669"/>
    <property type="project" value="UniProtKB-KW"/>
</dbReference>
<dbReference type="GO" id="GO:0005840">
    <property type="term" value="C:ribosome"/>
    <property type="evidence" value="ECO:0007669"/>
    <property type="project" value="UniProtKB-KW"/>
</dbReference>
<dbReference type="GO" id="GO:0019843">
    <property type="term" value="F:rRNA binding"/>
    <property type="evidence" value="ECO:0007669"/>
    <property type="project" value="UniProtKB-UniRule"/>
</dbReference>
<dbReference type="GO" id="GO:0003735">
    <property type="term" value="F:structural constituent of ribosome"/>
    <property type="evidence" value="ECO:0007669"/>
    <property type="project" value="InterPro"/>
</dbReference>
<dbReference type="GO" id="GO:0006412">
    <property type="term" value="P:translation"/>
    <property type="evidence" value="ECO:0007669"/>
    <property type="project" value="UniProtKB-UniRule"/>
</dbReference>
<dbReference type="HAMAP" id="MF_01363">
    <property type="entry name" value="Ribosomal_bL21"/>
    <property type="match status" value="1"/>
</dbReference>
<dbReference type="InterPro" id="IPR028909">
    <property type="entry name" value="bL21-like"/>
</dbReference>
<dbReference type="InterPro" id="IPR036164">
    <property type="entry name" value="bL21-like_sf"/>
</dbReference>
<dbReference type="InterPro" id="IPR001787">
    <property type="entry name" value="Ribosomal_bL21"/>
</dbReference>
<dbReference type="InterPro" id="IPR018258">
    <property type="entry name" value="Ribosomal_bL21_CS"/>
</dbReference>
<dbReference type="NCBIfam" id="TIGR00061">
    <property type="entry name" value="L21"/>
    <property type="match status" value="1"/>
</dbReference>
<dbReference type="PANTHER" id="PTHR21349">
    <property type="entry name" value="50S RIBOSOMAL PROTEIN L21"/>
    <property type="match status" value="1"/>
</dbReference>
<dbReference type="PANTHER" id="PTHR21349:SF0">
    <property type="entry name" value="LARGE RIBOSOMAL SUBUNIT PROTEIN BL21M"/>
    <property type="match status" value="1"/>
</dbReference>
<dbReference type="Pfam" id="PF00829">
    <property type="entry name" value="Ribosomal_L21p"/>
    <property type="match status" value="1"/>
</dbReference>
<dbReference type="SUPFAM" id="SSF141091">
    <property type="entry name" value="L21p-like"/>
    <property type="match status" value="1"/>
</dbReference>
<dbReference type="PROSITE" id="PS01169">
    <property type="entry name" value="RIBOSOMAL_L21"/>
    <property type="match status" value="1"/>
</dbReference>
<reference key="1">
    <citation type="submission" date="2008-04" db="EMBL/GenBank/DDBJ databases">
        <title>Complete sequence of chromosome of Exiguobacterium sibiricum 255-15.</title>
        <authorList>
            <consortium name="US DOE Joint Genome Institute"/>
            <person name="Copeland A."/>
            <person name="Lucas S."/>
            <person name="Lapidus A."/>
            <person name="Glavina del Rio T."/>
            <person name="Dalin E."/>
            <person name="Tice H."/>
            <person name="Bruce D."/>
            <person name="Goodwin L."/>
            <person name="Pitluck S."/>
            <person name="Kiss H."/>
            <person name="Chertkov O."/>
            <person name="Monk C."/>
            <person name="Brettin T."/>
            <person name="Detter J.C."/>
            <person name="Han C."/>
            <person name="Kuske C.R."/>
            <person name="Schmutz J."/>
            <person name="Larimer F."/>
            <person name="Land M."/>
            <person name="Hauser L."/>
            <person name="Kyrpides N."/>
            <person name="Mikhailova N."/>
            <person name="Vishnivetskaya T."/>
            <person name="Rodrigues D.F."/>
            <person name="Gilichinsky D."/>
            <person name="Tiedje J."/>
            <person name="Richardson P."/>
        </authorList>
    </citation>
    <scope>NUCLEOTIDE SEQUENCE [LARGE SCALE GENOMIC DNA]</scope>
    <source>
        <strain>DSM 17290 / CCUG 55495 / CIP 109462 / JCM 13490 / 255-15</strain>
    </source>
</reference>
<comment type="function">
    <text evidence="1">This protein binds to 23S rRNA in the presence of protein L20.</text>
</comment>
<comment type="subunit">
    <text evidence="1">Part of the 50S ribosomal subunit. Contacts protein L20.</text>
</comment>
<comment type="similarity">
    <text evidence="1">Belongs to the bacterial ribosomal protein bL21 family.</text>
</comment>